<feature type="signal peptide" evidence="3">
    <location>
        <begin position="1"/>
        <end position="22"/>
    </location>
</feature>
<feature type="propeptide" id="PRO_0000379914" evidence="1">
    <location>
        <begin position="23"/>
        <end position="41"/>
    </location>
</feature>
<feature type="peptide" id="PRO_0000379915" description="Omega-hexatoxin-Ar1e">
    <location>
        <begin position="42"/>
        <end position="78"/>
    </location>
</feature>
<feature type="site" description="Critical for insecticidal activity" evidence="2">
    <location>
        <position position="51"/>
    </location>
</feature>
<feature type="site" description="Critical for insecticidal activity" evidence="2">
    <location>
        <position position="68"/>
    </location>
</feature>
<feature type="site" description="Critical for insecticidal activity" evidence="2">
    <location>
        <position position="76"/>
    </location>
</feature>
<feature type="disulfide bond" evidence="2">
    <location>
        <begin position="45"/>
        <end position="59"/>
    </location>
</feature>
<feature type="disulfide bond" evidence="2">
    <location>
        <begin position="52"/>
        <end position="63"/>
    </location>
</feature>
<feature type="disulfide bond" evidence="2">
    <location>
        <begin position="58"/>
        <end position="77"/>
    </location>
</feature>
<evidence type="ECO:0000250" key="1"/>
<evidence type="ECO:0000250" key="2">
    <source>
        <dbReference type="UniProtKB" id="P56207"/>
    </source>
</evidence>
<evidence type="ECO:0000255" key="3"/>
<evidence type="ECO:0000305" key="4"/>
<accession>A5A3H4</accession>
<dbReference type="EMBL" id="EF523498">
    <property type="protein sequence ID" value="ABP63657.1"/>
    <property type="molecule type" value="mRNA"/>
</dbReference>
<dbReference type="SMR" id="A5A3H4"/>
<dbReference type="ArachnoServer" id="AS000024">
    <property type="toxin name" value="omega-hexatoxin-Ar1e"/>
</dbReference>
<dbReference type="GO" id="GO:0005576">
    <property type="term" value="C:extracellular region"/>
    <property type="evidence" value="ECO:0007669"/>
    <property type="project" value="UniProtKB-SubCell"/>
</dbReference>
<dbReference type="GO" id="GO:0019855">
    <property type="term" value="F:calcium channel inhibitor activity"/>
    <property type="evidence" value="ECO:0007669"/>
    <property type="project" value="InterPro"/>
</dbReference>
<dbReference type="GO" id="GO:0017080">
    <property type="term" value="F:sodium channel regulator activity"/>
    <property type="evidence" value="ECO:0007669"/>
    <property type="project" value="UniProtKB-KW"/>
</dbReference>
<dbReference type="GO" id="GO:0090729">
    <property type="term" value="F:toxin activity"/>
    <property type="evidence" value="ECO:0007669"/>
    <property type="project" value="UniProtKB-KW"/>
</dbReference>
<dbReference type="GO" id="GO:0006952">
    <property type="term" value="P:defense response"/>
    <property type="evidence" value="ECO:0007669"/>
    <property type="project" value="InterPro"/>
</dbReference>
<dbReference type="InterPro" id="IPR009415">
    <property type="entry name" value="Omega-atracotox"/>
</dbReference>
<dbReference type="InterPro" id="IPR018071">
    <property type="entry name" value="Omega-atracotox_CS"/>
</dbReference>
<dbReference type="Pfam" id="PF06357">
    <property type="entry name" value="Omega-toxin"/>
    <property type="match status" value="1"/>
</dbReference>
<dbReference type="SUPFAM" id="SSF57059">
    <property type="entry name" value="omega toxin-like"/>
    <property type="match status" value="1"/>
</dbReference>
<dbReference type="PROSITE" id="PS60016">
    <property type="entry name" value="OMEGA_ACTX_1"/>
    <property type="match status" value="1"/>
</dbReference>
<reference key="1">
    <citation type="journal article" date="2007" name="Biochem. Pharmacol.">
        <title>The omega-atracotoxins: selective blockers of insect M-LVA and HVA calcium channels.</title>
        <authorList>
            <person name="Chong Y."/>
            <person name="Hayes J.L."/>
            <person name="Sollod B."/>
            <person name="Wen S."/>
            <person name="Wilson D.T."/>
            <person name="Hains P.G."/>
            <person name="Hodgson W.C."/>
            <person name="Broady K.W."/>
            <person name="King G.F."/>
            <person name="Nicholson G.M."/>
        </authorList>
    </citation>
    <scope>NUCLEOTIDE SEQUENCE [MRNA]</scope>
    <source>
        <strain>XenFW139</strain>
        <tissue>Venom gland</tissue>
    </source>
</reference>
<protein>
    <recommendedName>
        <fullName>Omega-hexatoxin-Ar1e</fullName>
        <shortName>Omega-HXTX-Ar1e</shortName>
    </recommendedName>
    <alternativeName>
        <fullName>Omega-atracotoxin-Ar1e</fullName>
        <shortName>Omega-ACTX-Ar1e</shortName>
    </alternativeName>
</protein>
<sequence>MNTATGVIALLVLATVIGCIEAEDTRADLQGGEAAEKVFRRSPTCIPSGQPCPYNENCCSKSCTYKENENGNTVQRCD</sequence>
<organism>
    <name type="scientific">Atrax robustus</name>
    <name type="common">Sydney funnel-web spider</name>
    <dbReference type="NCBI Taxonomy" id="6903"/>
    <lineage>
        <taxon>Eukaryota</taxon>
        <taxon>Metazoa</taxon>
        <taxon>Ecdysozoa</taxon>
        <taxon>Arthropoda</taxon>
        <taxon>Chelicerata</taxon>
        <taxon>Arachnida</taxon>
        <taxon>Araneae</taxon>
        <taxon>Mygalomorphae</taxon>
        <taxon>Hexathelidae</taxon>
        <taxon>Atrax</taxon>
    </lineage>
</organism>
<proteinExistence type="evidence at transcript level"/>
<name>TO1E_ATRRO</name>
<comment type="function">
    <text evidence="1">Insecticidal toxin that reversibly and voltage-independently blocks both mid-low- (M-LVA) and high-voltage-activated (HVA) calcium channels (Cav) in cockroach DUM neurons. Also causes a modest block of insect sodium channel currents (Nav). Induces potent excitatory symptoms, followed by flaccid paralysis leading to death in house crickets (By similarity).</text>
</comment>
<comment type="subcellular location">
    <subcellularLocation>
        <location evidence="1">Secreted</location>
    </subcellularLocation>
</comment>
<comment type="tissue specificity">
    <text>Expressed by the venom gland.</text>
</comment>
<comment type="domain">
    <text evidence="1">The presence of a 'disulfide through disulfide knot' structurally defines this protein as a knottin.</text>
</comment>
<comment type="miscellaneous">
    <text>This toxin comes from a male specimen. It is observed that propeptide sequences coming from male specimen are identical but have only limited homology with the female paralogs, but the reason is unknown.</text>
</comment>
<comment type="similarity">
    <text evidence="4">Belongs to the neurotoxin 08 (Shiva) family. 01 (omega toxin) subfamily.</text>
</comment>
<keyword id="KW-0108">Calcium channel impairing toxin</keyword>
<keyword id="KW-0165">Cleavage on pair of basic residues</keyword>
<keyword id="KW-1015">Disulfide bond</keyword>
<keyword id="KW-0872">Ion channel impairing toxin</keyword>
<keyword id="KW-0960">Knottin</keyword>
<keyword id="KW-0528">Neurotoxin</keyword>
<keyword id="KW-0964">Secreted</keyword>
<keyword id="KW-0732">Signal</keyword>
<keyword id="KW-0800">Toxin</keyword>
<keyword id="KW-1218">Voltage-gated calcium channel impairing toxin</keyword>
<keyword id="KW-0738">Voltage-gated sodium channel impairing toxin</keyword>